<reference key="1">
    <citation type="submission" date="2008-10" db="EMBL/GenBank/DDBJ databases">
        <title>Genome sequence of Clostridium botulinum A2 Kyoto.</title>
        <authorList>
            <person name="Shrivastava S."/>
            <person name="Brinkac L.M."/>
            <person name="Brown J.L."/>
            <person name="Bruce D."/>
            <person name="Detter C.C."/>
            <person name="Johnson E.A."/>
            <person name="Munk C.A."/>
            <person name="Smith L.A."/>
            <person name="Smith T.J."/>
            <person name="Sutton G."/>
            <person name="Brettin T.S."/>
        </authorList>
    </citation>
    <scope>NUCLEOTIDE SEQUENCE [LARGE SCALE GENOMIC DNA]</scope>
    <source>
        <strain>Kyoto / Type A2</strain>
    </source>
</reference>
<accession>C1FMU8</accession>
<feature type="chain" id="PRO_1000165733" description="Large ribosomal subunit protein uL2">
    <location>
        <begin position="1"/>
        <end position="277"/>
    </location>
</feature>
<feature type="region of interest" description="Disordered" evidence="2">
    <location>
        <begin position="219"/>
        <end position="277"/>
    </location>
</feature>
<gene>
    <name evidence="1" type="primary">rplB</name>
    <name type="ordered locus">CLM_3945</name>
</gene>
<evidence type="ECO:0000255" key="1">
    <source>
        <dbReference type="HAMAP-Rule" id="MF_01320"/>
    </source>
</evidence>
<evidence type="ECO:0000256" key="2">
    <source>
        <dbReference type="SAM" id="MobiDB-lite"/>
    </source>
</evidence>
<evidence type="ECO:0000305" key="3"/>
<dbReference type="EMBL" id="CP001581">
    <property type="protein sequence ID" value="ACO83731.1"/>
    <property type="molecule type" value="Genomic_DNA"/>
</dbReference>
<dbReference type="RefSeq" id="WP_003357299.1">
    <property type="nucleotide sequence ID" value="NC_012563.1"/>
</dbReference>
<dbReference type="SMR" id="C1FMU8"/>
<dbReference type="GeneID" id="5187734"/>
<dbReference type="KEGG" id="cby:CLM_3945"/>
<dbReference type="eggNOG" id="COG0090">
    <property type="taxonomic scope" value="Bacteria"/>
</dbReference>
<dbReference type="HOGENOM" id="CLU_036235_2_1_9"/>
<dbReference type="Proteomes" id="UP000001374">
    <property type="component" value="Chromosome"/>
</dbReference>
<dbReference type="GO" id="GO:0015934">
    <property type="term" value="C:large ribosomal subunit"/>
    <property type="evidence" value="ECO:0007669"/>
    <property type="project" value="InterPro"/>
</dbReference>
<dbReference type="GO" id="GO:0019843">
    <property type="term" value="F:rRNA binding"/>
    <property type="evidence" value="ECO:0007669"/>
    <property type="project" value="UniProtKB-UniRule"/>
</dbReference>
<dbReference type="GO" id="GO:0003735">
    <property type="term" value="F:structural constituent of ribosome"/>
    <property type="evidence" value="ECO:0007669"/>
    <property type="project" value="InterPro"/>
</dbReference>
<dbReference type="GO" id="GO:0016740">
    <property type="term" value="F:transferase activity"/>
    <property type="evidence" value="ECO:0007669"/>
    <property type="project" value="InterPro"/>
</dbReference>
<dbReference type="GO" id="GO:0002181">
    <property type="term" value="P:cytoplasmic translation"/>
    <property type="evidence" value="ECO:0007669"/>
    <property type="project" value="TreeGrafter"/>
</dbReference>
<dbReference type="FunFam" id="2.30.30.30:FF:000001">
    <property type="entry name" value="50S ribosomal protein L2"/>
    <property type="match status" value="1"/>
</dbReference>
<dbReference type="FunFam" id="2.40.50.140:FF:000003">
    <property type="entry name" value="50S ribosomal protein L2"/>
    <property type="match status" value="1"/>
</dbReference>
<dbReference type="FunFam" id="4.10.950.10:FF:000001">
    <property type="entry name" value="50S ribosomal protein L2"/>
    <property type="match status" value="1"/>
</dbReference>
<dbReference type="Gene3D" id="2.30.30.30">
    <property type="match status" value="1"/>
</dbReference>
<dbReference type="Gene3D" id="2.40.50.140">
    <property type="entry name" value="Nucleic acid-binding proteins"/>
    <property type="match status" value="1"/>
</dbReference>
<dbReference type="Gene3D" id="4.10.950.10">
    <property type="entry name" value="Ribosomal protein L2, domain 3"/>
    <property type="match status" value="1"/>
</dbReference>
<dbReference type="HAMAP" id="MF_01320_B">
    <property type="entry name" value="Ribosomal_uL2_B"/>
    <property type="match status" value="1"/>
</dbReference>
<dbReference type="InterPro" id="IPR012340">
    <property type="entry name" value="NA-bd_OB-fold"/>
</dbReference>
<dbReference type="InterPro" id="IPR014722">
    <property type="entry name" value="Rib_uL2_dom2"/>
</dbReference>
<dbReference type="InterPro" id="IPR002171">
    <property type="entry name" value="Ribosomal_uL2"/>
</dbReference>
<dbReference type="InterPro" id="IPR005880">
    <property type="entry name" value="Ribosomal_uL2_bac/org-type"/>
</dbReference>
<dbReference type="InterPro" id="IPR022669">
    <property type="entry name" value="Ribosomal_uL2_C"/>
</dbReference>
<dbReference type="InterPro" id="IPR022671">
    <property type="entry name" value="Ribosomal_uL2_CS"/>
</dbReference>
<dbReference type="InterPro" id="IPR014726">
    <property type="entry name" value="Ribosomal_uL2_dom3"/>
</dbReference>
<dbReference type="InterPro" id="IPR022666">
    <property type="entry name" value="Ribosomal_uL2_RNA-bd_dom"/>
</dbReference>
<dbReference type="InterPro" id="IPR008991">
    <property type="entry name" value="Translation_prot_SH3-like_sf"/>
</dbReference>
<dbReference type="NCBIfam" id="TIGR01171">
    <property type="entry name" value="rplB_bact"/>
    <property type="match status" value="1"/>
</dbReference>
<dbReference type="PANTHER" id="PTHR13691:SF5">
    <property type="entry name" value="LARGE RIBOSOMAL SUBUNIT PROTEIN UL2M"/>
    <property type="match status" value="1"/>
</dbReference>
<dbReference type="PANTHER" id="PTHR13691">
    <property type="entry name" value="RIBOSOMAL PROTEIN L2"/>
    <property type="match status" value="1"/>
</dbReference>
<dbReference type="Pfam" id="PF00181">
    <property type="entry name" value="Ribosomal_L2"/>
    <property type="match status" value="1"/>
</dbReference>
<dbReference type="Pfam" id="PF03947">
    <property type="entry name" value="Ribosomal_L2_C"/>
    <property type="match status" value="1"/>
</dbReference>
<dbReference type="PIRSF" id="PIRSF002158">
    <property type="entry name" value="Ribosomal_L2"/>
    <property type="match status" value="1"/>
</dbReference>
<dbReference type="SMART" id="SM01383">
    <property type="entry name" value="Ribosomal_L2"/>
    <property type="match status" value="1"/>
</dbReference>
<dbReference type="SMART" id="SM01382">
    <property type="entry name" value="Ribosomal_L2_C"/>
    <property type="match status" value="1"/>
</dbReference>
<dbReference type="SUPFAM" id="SSF50249">
    <property type="entry name" value="Nucleic acid-binding proteins"/>
    <property type="match status" value="1"/>
</dbReference>
<dbReference type="SUPFAM" id="SSF50104">
    <property type="entry name" value="Translation proteins SH3-like domain"/>
    <property type="match status" value="1"/>
</dbReference>
<dbReference type="PROSITE" id="PS00467">
    <property type="entry name" value="RIBOSOMAL_L2"/>
    <property type="match status" value="1"/>
</dbReference>
<sequence length="277" mass="30345">MAVKGFRPTTPTRREMTMCTFEEITTSTPEKSLLVSLKKSGGRNANGKITVRHIGGGAKRKYRIIDFKRNKDNIPAKVVSIEYDPNRTAFIALVVYADGEKRYIIAPVGLKVGDTVVSGPESDIKVGNCLPIRNIPVGTVIHNIELAAGKGAQLVRSAGNSAQLMAKEGDYSQVRLPSGEVRYIRVECRATIGVVSNQTSEIVNIGKAGRKRHMGVRPTVRGSVMNPNDHPHGGGEGRSPIGHPSPRTPWGKPALGYKTRKNKKYSDRFIVKRRHDK</sequence>
<keyword id="KW-0687">Ribonucleoprotein</keyword>
<keyword id="KW-0689">Ribosomal protein</keyword>
<keyword id="KW-0694">RNA-binding</keyword>
<keyword id="KW-0699">rRNA-binding</keyword>
<organism>
    <name type="scientific">Clostridium botulinum (strain Kyoto / Type A2)</name>
    <dbReference type="NCBI Taxonomy" id="536232"/>
    <lineage>
        <taxon>Bacteria</taxon>
        <taxon>Bacillati</taxon>
        <taxon>Bacillota</taxon>
        <taxon>Clostridia</taxon>
        <taxon>Eubacteriales</taxon>
        <taxon>Clostridiaceae</taxon>
        <taxon>Clostridium</taxon>
    </lineage>
</organism>
<protein>
    <recommendedName>
        <fullName evidence="1">Large ribosomal subunit protein uL2</fullName>
    </recommendedName>
    <alternativeName>
        <fullName evidence="3">50S ribosomal protein L2</fullName>
    </alternativeName>
</protein>
<comment type="function">
    <text evidence="1">One of the primary rRNA binding proteins. Required for association of the 30S and 50S subunits to form the 70S ribosome, for tRNA binding and peptide bond formation. It has been suggested to have peptidyltransferase activity; this is somewhat controversial. Makes several contacts with the 16S rRNA in the 70S ribosome.</text>
</comment>
<comment type="subunit">
    <text evidence="1">Part of the 50S ribosomal subunit. Forms a bridge to the 30S subunit in the 70S ribosome.</text>
</comment>
<comment type="similarity">
    <text evidence="1">Belongs to the universal ribosomal protein uL2 family.</text>
</comment>
<name>RL2_CLOBJ</name>
<proteinExistence type="inferred from homology"/>